<accession>P32186</accession>
<keyword id="KW-0963">Cytoplasm</keyword>
<keyword id="KW-0251">Elongation factor</keyword>
<keyword id="KW-0342">GTP-binding</keyword>
<keyword id="KW-0488">Methylation</keyword>
<keyword id="KW-0547">Nucleotide-binding</keyword>
<keyword id="KW-0648">Protein biosynthesis</keyword>
<proteinExistence type="inferred from homology"/>
<comment type="function">
    <text>This protein promotes the GTP-dependent binding of aminoacyl-tRNA to the A-site of ribosomes during protein biosynthesis.</text>
</comment>
<comment type="subcellular location">
    <subcellularLocation>
        <location>Cytoplasm</location>
    </subcellularLocation>
</comment>
<comment type="similarity">
    <text evidence="3">Belongs to the TRAFAC class translation factor GTPase superfamily. Classic translation factor GTPase family. EF-Tu/EF-1A subfamily.</text>
</comment>
<name>EF1A_PUCGR</name>
<evidence type="ECO:0000250" key="1"/>
<evidence type="ECO:0000250" key="2">
    <source>
        <dbReference type="UniProtKB" id="P02994"/>
    </source>
</evidence>
<evidence type="ECO:0000255" key="3">
    <source>
        <dbReference type="PROSITE-ProRule" id="PRU01059"/>
    </source>
</evidence>
<reference key="1">
    <citation type="journal article" date="1995" name="Curr. Genet.">
        <title>Isolation and characterization of the EF-1 alpha gene of the filamentous fungus Puccinia graminis f. sp. tritici.</title>
        <authorList>
            <person name="Schillberg S."/>
            <person name="Gross P."/>
            <person name="Tiburzy R."/>
        </authorList>
    </citation>
    <scope>NUCLEOTIDE SEQUENCE [GENOMIC DNA]</scope>
    <source>
        <strain>Sp. tritici race 32</strain>
    </source>
</reference>
<gene>
    <name type="primary">TEF</name>
</gene>
<sequence>MGKEKNHVNVVVIGHVDSGKSTTTGHLIYKCGGIDKRTIEKFEKEAAELGKGSFKYAWVLDKLKAERERGITIDIALWKFETPKYYVTVIDAPGHRDFIKNMITGTSQADCAILIIAAGTGEFEAGISKDGQTREHALLAFTLGVRQLIVAINKMDTTKWSEQRFEIVKETSNFVKKVGYNPKSIAFVPISGWHGDNMLEESTNMGWFKGWTKETKAGVSKGKTLLDAIDAIEPPSRPTDKPLRLPLQDVYKIGGIGTVPVGRVETGTIKAGMVVTFAPANVTTEVKSVEMHHEQLEAGMPGDNVGFNVKNVSVKDIRRGNVCGDTKCDPPKEAASFVAQVIVLNHPGQIGNGYCPVLDCHTAHIACKFDTLQQKIDRRTGKALEEAPKFVKSGDACLVKMVPSKAMCVEPFADYPPLGRFAVRDMRQTVAVGVIKSVEKTDGKAGKVTKAAVKPVPRSSYAR</sequence>
<feature type="initiator methionine" description="Removed" evidence="2">
    <location>
        <position position="1"/>
    </location>
</feature>
<feature type="chain" id="PRO_0000090962" description="Elongation factor 1-alpha">
    <location>
        <begin position="2"/>
        <end position="463"/>
    </location>
</feature>
<feature type="domain" description="tr-type G" evidence="3">
    <location>
        <begin position="5"/>
        <end position="239"/>
    </location>
</feature>
<feature type="region of interest" description="G1" evidence="3">
    <location>
        <begin position="14"/>
        <end position="21"/>
    </location>
</feature>
<feature type="region of interest" description="G2" evidence="3">
    <location>
        <begin position="70"/>
        <end position="74"/>
    </location>
</feature>
<feature type="region of interest" description="G3" evidence="3">
    <location>
        <begin position="91"/>
        <end position="94"/>
    </location>
</feature>
<feature type="region of interest" description="G4" evidence="3">
    <location>
        <begin position="153"/>
        <end position="156"/>
    </location>
</feature>
<feature type="region of interest" description="G5" evidence="3">
    <location>
        <begin position="191"/>
        <end position="193"/>
    </location>
</feature>
<feature type="binding site" evidence="1">
    <location>
        <begin position="14"/>
        <end position="21"/>
    </location>
    <ligand>
        <name>GTP</name>
        <dbReference type="ChEBI" id="CHEBI:37565"/>
    </ligand>
</feature>
<feature type="binding site" evidence="1">
    <location>
        <begin position="91"/>
        <end position="95"/>
    </location>
    <ligand>
        <name>GTP</name>
        <dbReference type="ChEBI" id="CHEBI:37565"/>
    </ligand>
</feature>
<feature type="binding site" evidence="1">
    <location>
        <begin position="153"/>
        <end position="156"/>
    </location>
    <ligand>
        <name>GTP</name>
        <dbReference type="ChEBI" id="CHEBI:37565"/>
    </ligand>
</feature>
<feature type="modified residue" description="N,N,N-trimethylglycine" evidence="2">
    <location>
        <position position="2"/>
    </location>
</feature>
<feature type="modified residue" description="N6,N6-dimethyllysine; alternate" evidence="2">
    <location>
        <position position="3"/>
    </location>
</feature>
<feature type="modified residue" description="N6-methyllysine; alternate" evidence="2">
    <location>
        <position position="3"/>
    </location>
</feature>
<feature type="modified residue" description="N6-methyllysine" evidence="2">
    <location>
        <position position="30"/>
    </location>
</feature>
<feature type="modified residue" description="N6,N6,N6-trimethyllysine" evidence="2">
    <location>
        <position position="79"/>
    </location>
</feature>
<feature type="modified residue" description="N6,N6-dimethyllysine; alternate" evidence="2">
    <location>
        <position position="315"/>
    </location>
</feature>
<feature type="modified residue" description="N6-methyllysine; alternate" evidence="2">
    <location>
        <position position="315"/>
    </location>
</feature>
<feature type="modified residue" description="N6-methyllysine" evidence="2">
    <location>
        <position position="389"/>
    </location>
</feature>
<dbReference type="EMBL" id="X73529">
    <property type="protein sequence ID" value="CAA51932.1"/>
    <property type="molecule type" value="Genomic_DNA"/>
</dbReference>
<dbReference type="PIR" id="S57200">
    <property type="entry name" value="S57200"/>
</dbReference>
<dbReference type="SMR" id="P32186"/>
<dbReference type="VEuPathDB" id="FungiDB:PGTG_14858"/>
<dbReference type="GO" id="GO:0005737">
    <property type="term" value="C:cytoplasm"/>
    <property type="evidence" value="ECO:0007669"/>
    <property type="project" value="UniProtKB-SubCell"/>
</dbReference>
<dbReference type="GO" id="GO:0005525">
    <property type="term" value="F:GTP binding"/>
    <property type="evidence" value="ECO:0007669"/>
    <property type="project" value="UniProtKB-KW"/>
</dbReference>
<dbReference type="GO" id="GO:0003924">
    <property type="term" value="F:GTPase activity"/>
    <property type="evidence" value="ECO:0007669"/>
    <property type="project" value="InterPro"/>
</dbReference>
<dbReference type="GO" id="GO:0003746">
    <property type="term" value="F:translation elongation factor activity"/>
    <property type="evidence" value="ECO:0007669"/>
    <property type="project" value="UniProtKB-KW"/>
</dbReference>
<dbReference type="CDD" id="cd01883">
    <property type="entry name" value="EF1_alpha"/>
    <property type="match status" value="1"/>
</dbReference>
<dbReference type="CDD" id="cd03693">
    <property type="entry name" value="EF1_alpha_II"/>
    <property type="match status" value="1"/>
</dbReference>
<dbReference type="CDD" id="cd03705">
    <property type="entry name" value="EF1_alpha_III"/>
    <property type="match status" value="1"/>
</dbReference>
<dbReference type="FunFam" id="2.40.30.10:FF:000003">
    <property type="entry name" value="Elongation factor 1-alpha"/>
    <property type="match status" value="1"/>
</dbReference>
<dbReference type="FunFam" id="2.40.30.10:FF:000005">
    <property type="entry name" value="Elongation factor 1-alpha"/>
    <property type="match status" value="1"/>
</dbReference>
<dbReference type="FunFam" id="3.40.50.300:FF:000211">
    <property type="entry name" value="Elongation factor 1-alpha"/>
    <property type="match status" value="1"/>
</dbReference>
<dbReference type="Gene3D" id="3.40.50.300">
    <property type="entry name" value="P-loop containing nucleotide triphosphate hydrolases"/>
    <property type="match status" value="1"/>
</dbReference>
<dbReference type="Gene3D" id="2.40.30.10">
    <property type="entry name" value="Translation factors"/>
    <property type="match status" value="2"/>
</dbReference>
<dbReference type="InterPro" id="IPR004161">
    <property type="entry name" value="EFTu-like_2"/>
</dbReference>
<dbReference type="InterPro" id="IPR031157">
    <property type="entry name" value="G_TR_CS"/>
</dbReference>
<dbReference type="InterPro" id="IPR054696">
    <property type="entry name" value="GTP-eEF1A_C"/>
</dbReference>
<dbReference type="InterPro" id="IPR027417">
    <property type="entry name" value="P-loop_NTPase"/>
</dbReference>
<dbReference type="InterPro" id="IPR000795">
    <property type="entry name" value="T_Tr_GTP-bd_dom"/>
</dbReference>
<dbReference type="InterPro" id="IPR050100">
    <property type="entry name" value="TRAFAC_GTPase_members"/>
</dbReference>
<dbReference type="InterPro" id="IPR009000">
    <property type="entry name" value="Transl_B-barrel_sf"/>
</dbReference>
<dbReference type="InterPro" id="IPR009001">
    <property type="entry name" value="Transl_elong_EF1A/Init_IF2_C"/>
</dbReference>
<dbReference type="InterPro" id="IPR004539">
    <property type="entry name" value="Transl_elong_EF1A_euk/arc"/>
</dbReference>
<dbReference type="NCBIfam" id="TIGR00483">
    <property type="entry name" value="EF-1_alpha"/>
    <property type="match status" value="1"/>
</dbReference>
<dbReference type="NCBIfam" id="NF008969">
    <property type="entry name" value="PRK12317.1"/>
    <property type="match status" value="1"/>
</dbReference>
<dbReference type="PANTHER" id="PTHR23115">
    <property type="entry name" value="TRANSLATION FACTOR"/>
    <property type="match status" value="1"/>
</dbReference>
<dbReference type="Pfam" id="PF22594">
    <property type="entry name" value="GTP-eEF1A_C"/>
    <property type="match status" value="1"/>
</dbReference>
<dbReference type="Pfam" id="PF00009">
    <property type="entry name" value="GTP_EFTU"/>
    <property type="match status" value="1"/>
</dbReference>
<dbReference type="Pfam" id="PF03144">
    <property type="entry name" value="GTP_EFTU_D2"/>
    <property type="match status" value="1"/>
</dbReference>
<dbReference type="PRINTS" id="PR00315">
    <property type="entry name" value="ELONGATNFCT"/>
</dbReference>
<dbReference type="SUPFAM" id="SSF50465">
    <property type="entry name" value="EF-Tu/eEF-1alpha/eIF2-gamma C-terminal domain"/>
    <property type="match status" value="1"/>
</dbReference>
<dbReference type="SUPFAM" id="SSF52540">
    <property type="entry name" value="P-loop containing nucleoside triphosphate hydrolases"/>
    <property type="match status" value="1"/>
</dbReference>
<dbReference type="SUPFAM" id="SSF50447">
    <property type="entry name" value="Translation proteins"/>
    <property type="match status" value="1"/>
</dbReference>
<dbReference type="PROSITE" id="PS00301">
    <property type="entry name" value="G_TR_1"/>
    <property type="match status" value="1"/>
</dbReference>
<dbReference type="PROSITE" id="PS51722">
    <property type="entry name" value="G_TR_2"/>
    <property type="match status" value="1"/>
</dbReference>
<organism>
    <name type="scientific">Puccinia graminis</name>
    <name type="common">Black stem rust fungus</name>
    <dbReference type="NCBI Taxonomy" id="5297"/>
    <lineage>
        <taxon>Eukaryota</taxon>
        <taxon>Fungi</taxon>
        <taxon>Dikarya</taxon>
        <taxon>Basidiomycota</taxon>
        <taxon>Pucciniomycotina</taxon>
        <taxon>Pucciniomycetes</taxon>
        <taxon>Pucciniales</taxon>
        <taxon>Pucciniaceae</taxon>
        <taxon>Puccinia</taxon>
    </lineage>
</organism>
<protein>
    <recommendedName>
        <fullName>Elongation factor 1-alpha</fullName>
        <shortName>EF-1-alpha</shortName>
    </recommendedName>
</protein>